<name>MNMG_ALIB4</name>
<organism>
    <name type="scientific">Aliarcobacter butzleri (strain RM4018)</name>
    <name type="common">Arcobacter butzleri</name>
    <dbReference type="NCBI Taxonomy" id="367737"/>
    <lineage>
        <taxon>Bacteria</taxon>
        <taxon>Pseudomonadati</taxon>
        <taxon>Campylobacterota</taxon>
        <taxon>Epsilonproteobacteria</taxon>
        <taxon>Campylobacterales</taxon>
        <taxon>Arcobacteraceae</taxon>
        <taxon>Aliarcobacter</taxon>
    </lineage>
</organism>
<proteinExistence type="inferred from homology"/>
<evidence type="ECO:0000255" key="1">
    <source>
        <dbReference type="HAMAP-Rule" id="MF_00129"/>
    </source>
</evidence>
<keyword id="KW-0963">Cytoplasm</keyword>
<keyword id="KW-0274">FAD</keyword>
<keyword id="KW-0285">Flavoprotein</keyword>
<keyword id="KW-0520">NAD</keyword>
<keyword id="KW-1185">Reference proteome</keyword>
<keyword id="KW-0819">tRNA processing</keyword>
<sequence length="625" mass="70318">MNYDVIVVGGGHAGIEASLASARMGKKTLLITMLVEQIGAASCNPAIGGLAKGHLVRELDAIGGEMGLCTDNTGIQFRILNASKGAAVQGSRAQIDMDKYREYMRKVCHNTPNLEVYQDEVTALLVKNDNEVCGVKTKLTEEFIAKKVVLTTGTFMRGLVHIGENKYEAGRAWELPSTTLSTQLKELGLRVGRLKTGTPSRLDANSIDFSVMDMHGGDVNPAPFSFRTNKSDFAPTQFPCYITYTNEKTHEIISSNFYRAPLFTGQIEGLGPRYCPSIEDKVNRFAERDRHQLFLEPQTAMCTEYYINGMSSSLPIDVQKAMIHSVKGLENAKIIRYGYAIEYDYVDPTELKHTLETKKIKNLYHAGQINATTGYEEAAAQGLIAGINACLSIDEKEPFILRRDEAYIGVLIDDLVTKGTNEPYRMFTSRAEYRLLLREENADLRLSQYGHKFGLIDDETIKKVENKRKTIEEAIEFMANEWMTSKKETLELLESIGEEKINDRVLLVDLIGRNSIDIFKFEKLVPSFAHLDNYLKEQIIIEAKYYRYIQKQQKQIEKMKKMLKATIPESFSYKGLPGLSNEVVEKLEKHRPPTIFNASLISGVTPAALDIIHLNLNIFVTNTKK</sequence>
<feature type="chain" id="PRO_0000345239" description="tRNA uridine 5-carboxymethylaminomethyl modification enzyme MnmG">
    <location>
        <begin position="1"/>
        <end position="625"/>
    </location>
</feature>
<feature type="binding site" evidence="1">
    <location>
        <begin position="9"/>
        <end position="14"/>
    </location>
    <ligand>
        <name>FAD</name>
        <dbReference type="ChEBI" id="CHEBI:57692"/>
    </ligand>
</feature>
<feature type="binding site" evidence="1">
    <location>
        <position position="121"/>
    </location>
    <ligand>
        <name>FAD</name>
        <dbReference type="ChEBI" id="CHEBI:57692"/>
    </ligand>
</feature>
<feature type="binding site" evidence="1">
    <location>
        <position position="177"/>
    </location>
    <ligand>
        <name>FAD</name>
        <dbReference type="ChEBI" id="CHEBI:57692"/>
    </ligand>
</feature>
<feature type="binding site" evidence="1">
    <location>
        <begin position="271"/>
        <end position="285"/>
    </location>
    <ligand>
        <name>NAD(+)</name>
        <dbReference type="ChEBI" id="CHEBI:57540"/>
    </ligand>
</feature>
<feature type="binding site" evidence="1">
    <location>
        <position position="368"/>
    </location>
    <ligand>
        <name>FAD</name>
        <dbReference type="ChEBI" id="CHEBI:57692"/>
    </ligand>
</feature>
<protein>
    <recommendedName>
        <fullName evidence="1">tRNA uridine 5-carboxymethylaminomethyl modification enzyme MnmG</fullName>
    </recommendedName>
    <alternativeName>
        <fullName evidence="1">Glucose-inhibited division protein A</fullName>
    </alternativeName>
</protein>
<reference key="1">
    <citation type="journal article" date="2007" name="PLoS ONE">
        <title>The complete genome sequence and analysis of the Epsilonproteobacterium Arcobacter butzleri.</title>
        <authorList>
            <person name="Miller W.G."/>
            <person name="Parker C.T."/>
            <person name="Rubenfield M."/>
            <person name="Mendz G.L."/>
            <person name="Woesten M.M.S.M."/>
            <person name="Ussery D.W."/>
            <person name="Stolz J.F."/>
            <person name="Binnewies T.T."/>
            <person name="Hallin P.F."/>
            <person name="Wang G."/>
            <person name="Malek J.A."/>
            <person name="Rogosin A."/>
            <person name="Stanker L.H."/>
            <person name="Mandrell R.E."/>
        </authorList>
    </citation>
    <scope>NUCLEOTIDE SEQUENCE [LARGE SCALE GENOMIC DNA]</scope>
    <source>
        <strain>RM4018</strain>
    </source>
</reference>
<gene>
    <name evidence="1" type="primary">mnmG</name>
    <name evidence="1" type="synonym">gidA</name>
    <name type="ordered locus">Abu_2210</name>
</gene>
<comment type="function">
    <text evidence="1">NAD-binding protein involved in the addition of a carboxymethylaminomethyl (cmnm) group at the wobble position (U34) of certain tRNAs, forming tRNA-cmnm(5)s(2)U34.</text>
</comment>
<comment type="cofactor">
    <cofactor evidence="1">
        <name>FAD</name>
        <dbReference type="ChEBI" id="CHEBI:57692"/>
    </cofactor>
</comment>
<comment type="subunit">
    <text evidence="1">Homodimer. Heterotetramer of two MnmE and two MnmG subunits.</text>
</comment>
<comment type="subcellular location">
    <subcellularLocation>
        <location evidence="1">Cytoplasm</location>
    </subcellularLocation>
</comment>
<comment type="similarity">
    <text evidence="1">Belongs to the MnmG family.</text>
</comment>
<dbReference type="EMBL" id="CP000361">
    <property type="protein sequence ID" value="ABV68423.1"/>
    <property type="molecule type" value="Genomic_DNA"/>
</dbReference>
<dbReference type="RefSeq" id="WP_012148060.1">
    <property type="nucleotide sequence ID" value="NC_009850.1"/>
</dbReference>
<dbReference type="SMR" id="A8EWV0"/>
<dbReference type="STRING" id="367737.Abu_2210"/>
<dbReference type="GeneID" id="24303532"/>
<dbReference type="KEGG" id="abu:Abu_2210"/>
<dbReference type="eggNOG" id="COG0445">
    <property type="taxonomic scope" value="Bacteria"/>
</dbReference>
<dbReference type="HOGENOM" id="CLU_007831_2_2_7"/>
<dbReference type="Proteomes" id="UP000001136">
    <property type="component" value="Chromosome"/>
</dbReference>
<dbReference type="GO" id="GO:0005829">
    <property type="term" value="C:cytosol"/>
    <property type="evidence" value="ECO:0007669"/>
    <property type="project" value="TreeGrafter"/>
</dbReference>
<dbReference type="GO" id="GO:0050660">
    <property type="term" value="F:flavin adenine dinucleotide binding"/>
    <property type="evidence" value="ECO:0007669"/>
    <property type="project" value="UniProtKB-UniRule"/>
</dbReference>
<dbReference type="GO" id="GO:0030488">
    <property type="term" value="P:tRNA methylation"/>
    <property type="evidence" value="ECO:0007669"/>
    <property type="project" value="TreeGrafter"/>
</dbReference>
<dbReference type="GO" id="GO:0002098">
    <property type="term" value="P:tRNA wobble uridine modification"/>
    <property type="evidence" value="ECO:0007669"/>
    <property type="project" value="InterPro"/>
</dbReference>
<dbReference type="FunFam" id="1.10.150.570:FF:000001">
    <property type="entry name" value="tRNA uridine 5-carboxymethylaminomethyl modification enzyme MnmG"/>
    <property type="match status" value="1"/>
</dbReference>
<dbReference type="FunFam" id="3.50.50.60:FF:000002">
    <property type="entry name" value="tRNA uridine 5-carboxymethylaminomethyl modification enzyme MnmG"/>
    <property type="match status" value="1"/>
</dbReference>
<dbReference type="Gene3D" id="3.50.50.60">
    <property type="entry name" value="FAD/NAD(P)-binding domain"/>
    <property type="match status" value="2"/>
</dbReference>
<dbReference type="Gene3D" id="1.10.150.570">
    <property type="entry name" value="GidA associated domain, C-terminal subdomain"/>
    <property type="match status" value="1"/>
</dbReference>
<dbReference type="Gene3D" id="1.10.10.1800">
    <property type="entry name" value="tRNA uridine 5-carboxymethylaminomethyl modification enzyme MnmG/GidA"/>
    <property type="match status" value="1"/>
</dbReference>
<dbReference type="HAMAP" id="MF_00129">
    <property type="entry name" value="MnmG_GidA"/>
    <property type="match status" value="1"/>
</dbReference>
<dbReference type="InterPro" id="IPR036188">
    <property type="entry name" value="FAD/NAD-bd_sf"/>
</dbReference>
<dbReference type="InterPro" id="IPR049312">
    <property type="entry name" value="GIDA_C_N"/>
</dbReference>
<dbReference type="InterPro" id="IPR004416">
    <property type="entry name" value="MnmG"/>
</dbReference>
<dbReference type="InterPro" id="IPR002218">
    <property type="entry name" value="MnmG-rel"/>
</dbReference>
<dbReference type="InterPro" id="IPR020595">
    <property type="entry name" value="MnmG-rel_CS"/>
</dbReference>
<dbReference type="InterPro" id="IPR026904">
    <property type="entry name" value="MnmG_C"/>
</dbReference>
<dbReference type="InterPro" id="IPR047001">
    <property type="entry name" value="MnmG_C_subdom"/>
</dbReference>
<dbReference type="InterPro" id="IPR044920">
    <property type="entry name" value="MnmG_C_subdom_sf"/>
</dbReference>
<dbReference type="InterPro" id="IPR040131">
    <property type="entry name" value="MnmG_N"/>
</dbReference>
<dbReference type="NCBIfam" id="TIGR00136">
    <property type="entry name" value="mnmG_gidA"/>
    <property type="match status" value="1"/>
</dbReference>
<dbReference type="PANTHER" id="PTHR11806">
    <property type="entry name" value="GLUCOSE INHIBITED DIVISION PROTEIN A"/>
    <property type="match status" value="1"/>
</dbReference>
<dbReference type="PANTHER" id="PTHR11806:SF0">
    <property type="entry name" value="PROTEIN MTO1 HOMOLOG, MITOCHONDRIAL"/>
    <property type="match status" value="1"/>
</dbReference>
<dbReference type="Pfam" id="PF01134">
    <property type="entry name" value="GIDA"/>
    <property type="match status" value="1"/>
</dbReference>
<dbReference type="Pfam" id="PF21680">
    <property type="entry name" value="GIDA_C_1st"/>
    <property type="match status" value="1"/>
</dbReference>
<dbReference type="Pfam" id="PF13932">
    <property type="entry name" value="SAM_GIDA_C"/>
    <property type="match status" value="1"/>
</dbReference>
<dbReference type="PRINTS" id="PR00411">
    <property type="entry name" value="PNDRDTASEI"/>
</dbReference>
<dbReference type="SMART" id="SM01228">
    <property type="entry name" value="GIDA_assoc_3"/>
    <property type="match status" value="1"/>
</dbReference>
<dbReference type="SUPFAM" id="SSF51905">
    <property type="entry name" value="FAD/NAD(P)-binding domain"/>
    <property type="match status" value="1"/>
</dbReference>
<dbReference type="PROSITE" id="PS01280">
    <property type="entry name" value="GIDA_1"/>
    <property type="match status" value="1"/>
</dbReference>
<accession>A8EWV0</accession>